<dbReference type="EMBL" id="AE006468">
    <property type="protein sequence ID" value="AAL22368.1"/>
    <property type="molecule type" value="Genomic_DNA"/>
</dbReference>
<dbReference type="EMBL" id="U70434">
    <property type="protein sequence ID" value="AAB09706.1"/>
    <property type="molecule type" value="Genomic_DNA"/>
</dbReference>
<dbReference type="RefSeq" id="NP_462409.1">
    <property type="nucleotide sequence ID" value="NC_003197.2"/>
</dbReference>
<dbReference type="RefSeq" id="WP_000736973.1">
    <property type="nucleotide sequence ID" value="NC_003197.2"/>
</dbReference>
<dbReference type="SMR" id="P74884"/>
<dbReference type="STRING" id="99287.STM3506"/>
<dbReference type="PaxDb" id="99287-STM3506"/>
<dbReference type="GeneID" id="1255029"/>
<dbReference type="KEGG" id="stm:STM3506"/>
<dbReference type="PATRIC" id="fig|99287.12.peg.3705"/>
<dbReference type="HOGENOM" id="CLU_013350_3_0_6"/>
<dbReference type="OMA" id="YAFAMQC"/>
<dbReference type="PhylomeDB" id="P74884"/>
<dbReference type="BioCyc" id="SENT99287:STM3506-MONOMER"/>
<dbReference type="Proteomes" id="UP000001014">
    <property type="component" value="Chromosome"/>
</dbReference>
<dbReference type="GO" id="GO:0005886">
    <property type="term" value="C:plasma membrane"/>
    <property type="evidence" value="ECO:0000318"/>
    <property type="project" value="GO_Central"/>
</dbReference>
<dbReference type="GO" id="GO:0015093">
    <property type="term" value="F:ferrous iron transmembrane transporter activity"/>
    <property type="evidence" value="ECO:0000318"/>
    <property type="project" value="GO_Central"/>
</dbReference>
<dbReference type="GO" id="GO:0005525">
    <property type="term" value="F:GTP binding"/>
    <property type="evidence" value="ECO:0007669"/>
    <property type="project" value="UniProtKB-KW"/>
</dbReference>
<dbReference type="CDD" id="cd01879">
    <property type="entry name" value="FeoB"/>
    <property type="match status" value="1"/>
</dbReference>
<dbReference type="FunFam" id="3.40.50.300:FF:000426">
    <property type="entry name" value="Ferrous iron transport protein B"/>
    <property type="match status" value="1"/>
</dbReference>
<dbReference type="Gene3D" id="1.10.287.1770">
    <property type="match status" value="1"/>
</dbReference>
<dbReference type="Gene3D" id="3.40.50.300">
    <property type="entry name" value="P-loop containing nucleotide triphosphate hydrolases"/>
    <property type="match status" value="1"/>
</dbReference>
<dbReference type="InterPro" id="IPR003373">
    <property type="entry name" value="Fe2_transport_prot-B"/>
</dbReference>
<dbReference type="InterPro" id="IPR011640">
    <property type="entry name" value="Fe2_transport_prot_B_C"/>
</dbReference>
<dbReference type="InterPro" id="IPR041069">
    <property type="entry name" value="FeoB_Cyto"/>
</dbReference>
<dbReference type="InterPro" id="IPR050860">
    <property type="entry name" value="FeoB_GTPase"/>
</dbReference>
<dbReference type="InterPro" id="IPR030389">
    <property type="entry name" value="G_FEOB_dom"/>
</dbReference>
<dbReference type="InterPro" id="IPR011642">
    <property type="entry name" value="Gate_dom"/>
</dbReference>
<dbReference type="InterPro" id="IPR027417">
    <property type="entry name" value="P-loop_NTPase"/>
</dbReference>
<dbReference type="InterPro" id="IPR005225">
    <property type="entry name" value="Small_GTP-bd"/>
</dbReference>
<dbReference type="NCBIfam" id="TIGR00437">
    <property type="entry name" value="feoB"/>
    <property type="match status" value="1"/>
</dbReference>
<dbReference type="NCBIfam" id="NF007105">
    <property type="entry name" value="PRK09554.1"/>
    <property type="match status" value="1"/>
</dbReference>
<dbReference type="NCBIfam" id="TIGR00231">
    <property type="entry name" value="small_GTP"/>
    <property type="match status" value="1"/>
</dbReference>
<dbReference type="PANTHER" id="PTHR43185:SF1">
    <property type="entry name" value="FE(2+) TRANSPORTER FEOB"/>
    <property type="match status" value="1"/>
</dbReference>
<dbReference type="PANTHER" id="PTHR43185">
    <property type="entry name" value="FERROUS IRON TRANSPORT PROTEIN B"/>
    <property type="match status" value="1"/>
</dbReference>
<dbReference type="Pfam" id="PF07664">
    <property type="entry name" value="FeoB_C"/>
    <property type="match status" value="1"/>
</dbReference>
<dbReference type="Pfam" id="PF17910">
    <property type="entry name" value="FeoB_Cyto"/>
    <property type="match status" value="1"/>
</dbReference>
<dbReference type="Pfam" id="PF02421">
    <property type="entry name" value="FeoB_N"/>
    <property type="match status" value="1"/>
</dbReference>
<dbReference type="Pfam" id="PF07670">
    <property type="entry name" value="Gate"/>
    <property type="match status" value="2"/>
</dbReference>
<dbReference type="SUPFAM" id="SSF52540">
    <property type="entry name" value="P-loop containing nucleoside triphosphate hydrolases"/>
    <property type="match status" value="1"/>
</dbReference>
<dbReference type="PROSITE" id="PS51711">
    <property type="entry name" value="G_FEOB"/>
    <property type="match status" value="1"/>
</dbReference>
<name>FEOB_SALTY</name>
<comment type="function">
    <text evidence="6">Probable transporter for a GTP-driven Fe(2+) uptake system.</text>
</comment>
<comment type="subcellular location">
    <subcellularLocation>
        <location evidence="1">Cell inner membrane</location>
        <topology evidence="1">Multi-pass membrane protein</topology>
    </subcellularLocation>
</comment>
<comment type="induction">
    <text evidence="1">Iron uptake is repressed by the global regulator Fur.</text>
</comment>
<comment type="miscellaneous">
    <text evidence="4">Acquisition of Mn(2+) in addition to Fe(2+) is required for intercellular survival, replication in macrophages in vitro and for full virulence in vivo.</text>
</comment>
<comment type="similarity">
    <text evidence="3">Belongs to the TRAFAC class TrmE-Era-EngA-EngB-Septin-like GTPase superfamily. FeoB GTPase (TC 9.A.8) family.</text>
</comment>
<sequence>MKKLTIGLIGNPNSGKTTLFNQLTGARQRVGNWAGVTVERKEGQFATTDHQVTLVDLPGTYSLTTISSQTSLDEQIACHYILSGDADLLINVVDASNLERNLYLTLQLLELGIPCIVALNMLDIAEKQQVRIDVDALSTRLGCPVVPLVSTRGRGIEALKLAIDRHNANDNVELVHYAQPLLREADFLADAMAQEMPLQQRRWLGLQMLEGDIYSRAYAGEAAQNLDTSLARLKDEMDDPALHIADARYQCIAAICDVVSNTLTAEPSRFTRAVDKIILNRFLGLPIFLFVMYLMFLLAINIGGALQPLFDAGSVAIFIHGIQWIGYTLHFPDWLTIFLAQGLGGGINTVLPLVPQIGMMYLFLSFLEDSGYMARAAFVMDRLMQALGLPGKSFVPLIVGFGCNVPSVMGARTLDAPRERLMTIMMAPFMSCGARLAIFAVFAAAFFGQNGALAVFSLYVLGIVMAVLTGLMLKHTIMRGEASPFVMELPVYHVPHIKSLIIQTWQRLKGFVLRAGKVIIIVSIFLSAFNSFSLSGKIVDNINDSALASVSRVITPVFKPIGVHEDNWQATVGLFTGAMAKEVVVGTLNTLYTAENIQDEAFNPADFHLGDELLGAVDDTWQSLKDTFSLSVLANPIEASKGDGEMATGAMGVMDQKFGSAAAAYSYLIFVLLYVPCISVMGAIARESSRGWMGFSILWGLNIAYSLATLFYQVTSFSQHPTYSLICILAVIVFNVVVLSLLRRARSRVDIELLATRKNVSSCCSGTAGNCH</sequence>
<gene>
    <name type="primary">feoB</name>
    <name type="ordered locus">STM3506</name>
</gene>
<reference key="1">
    <citation type="journal article" date="2001" name="Nature">
        <title>Complete genome sequence of Salmonella enterica serovar Typhimurium LT2.</title>
        <authorList>
            <person name="McClelland M."/>
            <person name="Sanderson K.E."/>
            <person name="Spieth J."/>
            <person name="Clifton S.W."/>
            <person name="Latreille P."/>
            <person name="Courtney L."/>
            <person name="Porwollik S."/>
            <person name="Ali J."/>
            <person name="Dante M."/>
            <person name="Du F."/>
            <person name="Hou S."/>
            <person name="Layman D."/>
            <person name="Leonard S."/>
            <person name="Nguyen C."/>
            <person name="Scott K."/>
            <person name="Holmes A."/>
            <person name="Grewal N."/>
            <person name="Mulvaney E."/>
            <person name="Ryan E."/>
            <person name="Sun H."/>
            <person name="Florea L."/>
            <person name="Miller W."/>
            <person name="Stoneking T."/>
            <person name="Nhan M."/>
            <person name="Waterston R."/>
            <person name="Wilson R.K."/>
        </authorList>
    </citation>
    <scope>NUCLEOTIDE SEQUENCE [LARGE SCALE GENOMIC DNA]</scope>
    <source>
        <strain>LT2 / SGSC1412 / ATCC 700720</strain>
    </source>
</reference>
<reference key="2">
    <citation type="journal article" date="1996" name="Infect. Immun.">
        <title>Contribution of TonB- and Feo-mediated iron uptake to growth of Salmonella typhimurium in the mouse.</title>
        <authorList>
            <person name="Tsolis R.M."/>
            <person name="Baumler A.J."/>
            <person name="Heffron F."/>
            <person name="Stojiljkovic I."/>
        </authorList>
    </citation>
    <scope>NUCLEOTIDE SEQUENCE [GENOMIC DNA] OF 33-330</scope>
    <source>
        <strain>ATCC 14028 / SGSG 2980 / CDC 6516-60 / NCTC 12023</strain>
    </source>
</reference>
<reference key="3">
    <citation type="journal article" date="2002" name="Infect. Immun.">
        <title>Acquisition of Mn(II) in addition to Fe(II) is required for full virulence of Salmonella enterica serovar Typhimurium.</title>
        <authorList>
            <person name="Boyer E."/>
            <person name="Bergevin I."/>
            <person name="Malo D."/>
            <person name="Gros P."/>
            <person name="Cellier M.F.M."/>
        </authorList>
    </citation>
    <scope>FUNCTION</scope>
    <source>
        <strain>W</strain>
    </source>
</reference>
<organism>
    <name type="scientific">Salmonella typhimurium (strain LT2 / SGSC1412 / ATCC 700720)</name>
    <dbReference type="NCBI Taxonomy" id="99287"/>
    <lineage>
        <taxon>Bacteria</taxon>
        <taxon>Pseudomonadati</taxon>
        <taxon>Pseudomonadota</taxon>
        <taxon>Gammaproteobacteria</taxon>
        <taxon>Enterobacterales</taxon>
        <taxon>Enterobacteriaceae</taxon>
        <taxon>Salmonella</taxon>
    </lineage>
</organism>
<proteinExistence type="inferred from homology"/>
<keyword id="KW-0997">Cell inner membrane</keyword>
<keyword id="KW-1003">Cell membrane</keyword>
<keyword id="KW-0342">GTP-binding</keyword>
<keyword id="KW-0406">Ion transport</keyword>
<keyword id="KW-0408">Iron</keyword>
<keyword id="KW-0410">Iron transport</keyword>
<keyword id="KW-0472">Membrane</keyword>
<keyword id="KW-0547">Nucleotide-binding</keyword>
<keyword id="KW-1185">Reference proteome</keyword>
<keyword id="KW-0812">Transmembrane</keyword>
<keyword id="KW-1133">Transmembrane helix</keyword>
<keyword id="KW-0813">Transport</keyword>
<feature type="chain" id="PRO_0000210827" description="Fe(2+) transporter FeoB">
    <location>
        <begin position="1"/>
        <end position="772"/>
    </location>
</feature>
<feature type="transmembrane region" description="Helical" evidence="2">
    <location>
        <begin position="282"/>
        <end position="302"/>
    </location>
</feature>
<feature type="transmembrane region" description="Helical" evidence="2">
    <location>
        <begin position="309"/>
        <end position="329"/>
    </location>
</feature>
<feature type="transmembrane region" description="Helical" evidence="2">
    <location>
        <begin position="344"/>
        <end position="366"/>
    </location>
</feature>
<feature type="transmembrane region" description="Helical" evidence="2">
    <location>
        <begin position="383"/>
        <end position="403"/>
    </location>
</feature>
<feature type="transmembrane region" description="Helical" evidence="2">
    <location>
        <begin position="427"/>
        <end position="447"/>
    </location>
</feature>
<feature type="transmembrane region" description="Helical" evidence="2">
    <location>
        <begin position="453"/>
        <end position="473"/>
    </location>
</feature>
<feature type="transmembrane region" description="Helical" evidence="2">
    <location>
        <begin position="518"/>
        <end position="538"/>
    </location>
</feature>
<feature type="transmembrane region" description="Helical" evidence="2">
    <location>
        <begin position="664"/>
        <end position="684"/>
    </location>
</feature>
<feature type="transmembrane region" description="Helical" evidence="2">
    <location>
        <begin position="691"/>
        <end position="711"/>
    </location>
</feature>
<feature type="transmembrane region" description="Helical" evidence="2">
    <location>
        <begin position="722"/>
        <end position="742"/>
    </location>
</feature>
<feature type="domain" description="FeoB-type G" evidence="3">
    <location>
        <begin position="3"/>
        <end position="169"/>
    </location>
</feature>
<feature type="binding site" evidence="3">
    <location>
        <begin position="10"/>
        <end position="17"/>
    </location>
    <ligand>
        <name>GTP</name>
        <dbReference type="ChEBI" id="CHEBI:37565"/>
        <label>1</label>
    </ligand>
</feature>
<feature type="binding site" evidence="3">
    <location>
        <begin position="35"/>
        <end position="39"/>
    </location>
    <ligand>
        <name>GTP</name>
        <dbReference type="ChEBI" id="CHEBI:37565"/>
        <label>2</label>
    </ligand>
</feature>
<feature type="binding site" evidence="3">
    <location>
        <begin position="56"/>
        <end position="59"/>
    </location>
    <ligand>
        <name>GTP</name>
        <dbReference type="ChEBI" id="CHEBI:37565"/>
        <label>3</label>
    </ligand>
</feature>
<feature type="binding site" evidence="3">
    <location>
        <begin position="120"/>
        <end position="123"/>
    </location>
    <ligand>
        <name>GTP</name>
        <dbReference type="ChEBI" id="CHEBI:37565"/>
    </ligand>
</feature>
<feature type="binding site" evidence="3">
    <location>
        <begin position="149"/>
        <end position="151"/>
    </location>
    <ligand>
        <name>GTP</name>
        <dbReference type="ChEBI" id="CHEBI:37565"/>
    </ligand>
</feature>
<feature type="sequence conflict" description="In Ref. 2; AAB09706." evidence="5" ref="2">
    <original>WAGV</original>
    <variation>NSAF</variation>
    <location>
        <begin position="33"/>
        <end position="36"/>
    </location>
</feature>
<feature type="sequence conflict" description="In Ref. 2; AAB09706." evidence="5" ref="2">
    <original>N</original>
    <variation>Y</variation>
    <location>
        <position position="97"/>
    </location>
</feature>
<feature type="sequence conflict" description="In Ref. 2; AAB09706." evidence="5" ref="2">
    <original>I</original>
    <variation>V</variation>
    <location>
        <position position="302"/>
    </location>
</feature>
<feature type="sequence conflict" description="In Ref. 2; AAB09706." evidence="5" ref="2">
    <original>D</original>
    <variation>N</variation>
    <location>
        <position position="311"/>
    </location>
</feature>
<feature type="sequence conflict" description="In Ref. 2; AAB09706." evidence="5" ref="2">
    <original>YTLH</original>
    <variation>KPNS</variation>
    <location>
        <begin position="327"/>
        <end position="330"/>
    </location>
</feature>
<protein>
    <recommendedName>
        <fullName evidence="5">Fe(2+) transporter FeoB</fullName>
    </recommendedName>
    <alternativeName>
        <fullName>Ferrous iron transport protein B</fullName>
    </alternativeName>
</protein>
<evidence type="ECO:0000250" key="1">
    <source>
        <dbReference type="UniProtKB" id="P33650"/>
    </source>
</evidence>
<evidence type="ECO:0000255" key="2"/>
<evidence type="ECO:0000255" key="3">
    <source>
        <dbReference type="PROSITE-ProRule" id="PRU01048"/>
    </source>
</evidence>
<evidence type="ECO:0000269" key="4">
    <source>
    </source>
</evidence>
<evidence type="ECO:0000305" key="5"/>
<evidence type="ECO:0000305" key="6">
    <source>
    </source>
</evidence>
<accession>P74884</accession>